<protein>
    <recommendedName>
        <fullName evidence="1">Phospho-N-acetylmuramoyl-pentapeptide-transferase</fullName>
        <ecNumber evidence="1">2.7.8.13</ecNumber>
    </recommendedName>
    <alternativeName>
        <fullName evidence="1">UDP-MurNAc-pentapeptide phosphotransferase</fullName>
    </alternativeName>
</protein>
<accession>Q2YXE0</accession>
<reference key="1">
    <citation type="journal article" date="2007" name="PLoS ONE">
        <title>Molecular correlates of host specialization in Staphylococcus aureus.</title>
        <authorList>
            <person name="Herron-Olson L."/>
            <person name="Fitzgerald J.R."/>
            <person name="Musser J.M."/>
            <person name="Kapur V."/>
        </authorList>
    </citation>
    <scope>NUCLEOTIDE SEQUENCE [LARGE SCALE GENOMIC DNA]</scope>
    <source>
        <strain>bovine RF122 / ET3-1</strain>
    </source>
</reference>
<proteinExistence type="inferred from homology"/>
<sequence>MIFVYALLALVITFVLVPVLIPTLKRMKFGQSIREEGPQSHMKKTGTPTMGGLTFLLSIVITSLVAIIFVEQANPIILLLFVTIGFGLIGFIDDYIIVVKKNNQGLTSKQKFLAQIGIAIIFFVLSNVFHLVNFSTSIHIPFTNVAIPLSFAYVIFIVFLQVGFSNAVNLTDGLDGLATGLSIIGFTMYAIMSFVLGETAIGIFCIIMLFALLGFLPYNINPAKVFMGDTGSLALGGIFATISIMLNQELSLIFIGLVFVIETLSVMLQVASFKLTGKRIFKMSPIHHHFELIGWSEWKVVTVFWAVGLISGLIGLWIGVH</sequence>
<feature type="chain" id="PRO_0000235484" description="Phospho-N-acetylmuramoyl-pentapeptide-transferase">
    <location>
        <begin position="1"/>
        <end position="321"/>
    </location>
</feature>
<feature type="transmembrane region" description="Helical" evidence="1">
    <location>
        <begin position="1"/>
        <end position="21"/>
    </location>
</feature>
<feature type="transmembrane region" description="Helical" evidence="1">
    <location>
        <begin position="50"/>
        <end position="70"/>
    </location>
</feature>
<feature type="transmembrane region" description="Helical" evidence="1">
    <location>
        <begin position="76"/>
        <end position="96"/>
    </location>
</feature>
<feature type="transmembrane region" description="Helical" evidence="1">
    <location>
        <begin position="112"/>
        <end position="132"/>
    </location>
</feature>
<feature type="transmembrane region" description="Helical" evidence="1">
    <location>
        <begin position="140"/>
        <end position="160"/>
    </location>
</feature>
<feature type="transmembrane region" description="Helical" evidence="1">
    <location>
        <begin position="176"/>
        <end position="196"/>
    </location>
</feature>
<feature type="transmembrane region" description="Helical" evidence="1">
    <location>
        <begin position="200"/>
        <end position="220"/>
    </location>
</feature>
<feature type="transmembrane region" description="Helical" evidence="1">
    <location>
        <begin position="225"/>
        <end position="245"/>
    </location>
</feature>
<feature type="transmembrane region" description="Helical" evidence="1">
    <location>
        <begin position="250"/>
        <end position="270"/>
    </location>
</feature>
<feature type="transmembrane region" description="Helical" evidence="1">
    <location>
        <begin position="300"/>
        <end position="320"/>
    </location>
</feature>
<keyword id="KW-0131">Cell cycle</keyword>
<keyword id="KW-0132">Cell division</keyword>
<keyword id="KW-1003">Cell membrane</keyword>
<keyword id="KW-0133">Cell shape</keyword>
<keyword id="KW-0961">Cell wall biogenesis/degradation</keyword>
<keyword id="KW-0460">Magnesium</keyword>
<keyword id="KW-0472">Membrane</keyword>
<keyword id="KW-0479">Metal-binding</keyword>
<keyword id="KW-0573">Peptidoglycan synthesis</keyword>
<keyword id="KW-0808">Transferase</keyword>
<keyword id="KW-0812">Transmembrane</keyword>
<keyword id="KW-1133">Transmembrane helix</keyword>
<gene>
    <name evidence="1" type="primary">mraY</name>
    <name type="ordered locus">SAB1046</name>
</gene>
<organism>
    <name type="scientific">Staphylococcus aureus (strain bovine RF122 / ET3-1)</name>
    <dbReference type="NCBI Taxonomy" id="273036"/>
    <lineage>
        <taxon>Bacteria</taxon>
        <taxon>Bacillati</taxon>
        <taxon>Bacillota</taxon>
        <taxon>Bacilli</taxon>
        <taxon>Bacillales</taxon>
        <taxon>Staphylococcaceae</taxon>
        <taxon>Staphylococcus</taxon>
    </lineage>
</organism>
<dbReference type="EC" id="2.7.8.13" evidence="1"/>
<dbReference type="EMBL" id="AJ938182">
    <property type="protein sequence ID" value="CAI80734.1"/>
    <property type="molecule type" value="Genomic_DNA"/>
</dbReference>
<dbReference type="RefSeq" id="WP_000578465.1">
    <property type="nucleotide sequence ID" value="NC_007622.1"/>
</dbReference>
<dbReference type="SMR" id="Q2YXE0"/>
<dbReference type="KEGG" id="sab:SAB1046"/>
<dbReference type="HOGENOM" id="CLU_023982_0_1_9"/>
<dbReference type="UniPathway" id="UPA00219"/>
<dbReference type="GO" id="GO:0005886">
    <property type="term" value="C:plasma membrane"/>
    <property type="evidence" value="ECO:0007669"/>
    <property type="project" value="UniProtKB-SubCell"/>
</dbReference>
<dbReference type="GO" id="GO:0046872">
    <property type="term" value="F:metal ion binding"/>
    <property type="evidence" value="ECO:0007669"/>
    <property type="project" value="UniProtKB-KW"/>
</dbReference>
<dbReference type="GO" id="GO:0008963">
    <property type="term" value="F:phospho-N-acetylmuramoyl-pentapeptide-transferase activity"/>
    <property type="evidence" value="ECO:0007669"/>
    <property type="project" value="UniProtKB-UniRule"/>
</dbReference>
<dbReference type="GO" id="GO:0051301">
    <property type="term" value="P:cell division"/>
    <property type="evidence" value="ECO:0007669"/>
    <property type="project" value="UniProtKB-KW"/>
</dbReference>
<dbReference type="GO" id="GO:0071555">
    <property type="term" value="P:cell wall organization"/>
    <property type="evidence" value="ECO:0007669"/>
    <property type="project" value="UniProtKB-KW"/>
</dbReference>
<dbReference type="GO" id="GO:0009252">
    <property type="term" value="P:peptidoglycan biosynthetic process"/>
    <property type="evidence" value="ECO:0007669"/>
    <property type="project" value="UniProtKB-UniRule"/>
</dbReference>
<dbReference type="GO" id="GO:0008360">
    <property type="term" value="P:regulation of cell shape"/>
    <property type="evidence" value="ECO:0007669"/>
    <property type="project" value="UniProtKB-KW"/>
</dbReference>
<dbReference type="CDD" id="cd06852">
    <property type="entry name" value="GT_MraY"/>
    <property type="match status" value="1"/>
</dbReference>
<dbReference type="HAMAP" id="MF_00038">
    <property type="entry name" value="MraY"/>
    <property type="match status" value="1"/>
</dbReference>
<dbReference type="InterPro" id="IPR000715">
    <property type="entry name" value="Glycosyl_transferase_4"/>
</dbReference>
<dbReference type="InterPro" id="IPR003524">
    <property type="entry name" value="PNAcMuramoyl-5peptid_Trfase"/>
</dbReference>
<dbReference type="InterPro" id="IPR018480">
    <property type="entry name" value="PNAcMuramoyl-5peptid_Trfase_CS"/>
</dbReference>
<dbReference type="NCBIfam" id="TIGR00445">
    <property type="entry name" value="mraY"/>
    <property type="match status" value="1"/>
</dbReference>
<dbReference type="PANTHER" id="PTHR22926">
    <property type="entry name" value="PHOSPHO-N-ACETYLMURAMOYL-PENTAPEPTIDE-TRANSFERASE"/>
    <property type="match status" value="1"/>
</dbReference>
<dbReference type="PANTHER" id="PTHR22926:SF5">
    <property type="entry name" value="PHOSPHO-N-ACETYLMURAMOYL-PENTAPEPTIDE-TRANSFERASE HOMOLOG"/>
    <property type="match status" value="1"/>
</dbReference>
<dbReference type="Pfam" id="PF00953">
    <property type="entry name" value="Glycos_transf_4"/>
    <property type="match status" value="1"/>
</dbReference>
<dbReference type="PROSITE" id="PS01347">
    <property type="entry name" value="MRAY_1"/>
    <property type="match status" value="1"/>
</dbReference>
<dbReference type="PROSITE" id="PS01348">
    <property type="entry name" value="MRAY_2"/>
    <property type="match status" value="1"/>
</dbReference>
<comment type="function">
    <text evidence="1">Catalyzes the initial step of the lipid cycle reactions in the biosynthesis of the cell wall peptidoglycan: transfers peptidoglycan precursor phospho-MurNAc-pentapeptide from UDP-MurNAc-pentapeptide onto the lipid carrier undecaprenyl phosphate, yielding undecaprenyl-pyrophosphoryl-MurNAc-pentapeptide, known as lipid I.</text>
</comment>
<comment type="catalytic activity">
    <reaction evidence="1">
        <text>UDP-N-acetyl-alpha-D-muramoyl-L-alanyl-gamma-D-glutamyl-L-lysyl-D-alanyl-D-alanine + di-trans,octa-cis-undecaprenyl phosphate = Mur2Ac(oyl-L-Ala-gamma-D-Glu-L-Lys-D-Ala-D-Ala)-di-trans,octa-cis-undecaprenyl diphosphate + UMP</text>
        <dbReference type="Rhea" id="RHEA:21920"/>
        <dbReference type="ChEBI" id="CHEBI:57865"/>
        <dbReference type="ChEBI" id="CHEBI:60032"/>
        <dbReference type="ChEBI" id="CHEBI:60392"/>
        <dbReference type="ChEBI" id="CHEBI:70758"/>
        <dbReference type="EC" id="2.7.8.13"/>
    </reaction>
</comment>
<comment type="cofactor">
    <cofactor evidence="1">
        <name>Mg(2+)</name>
        <dbReference type="ChEBI" id="CHEBI:18420"/>
    </cofactor>
</comment>
<comment type="pathway">
    <text evidence="1">Cell wall biogenesis; peptidoglycan biosynthesis.</text>
</comment>
<comment type="subcellular location">
    <subcellularLocation>
        <location evidence="1">Cell membrane</location>
        <topology evidence="1">Multi-pass membrane protein</topology>
    </subcellularLocation>
</comment>
<comment type="similarity">
    <text evidence="1">Belongs to the glycosyltransferase 4 family. MraY subfamily.</text>
</comment>
<evidence type="ECO:0000255" key="1">
    <source>
        <dbReference type="HAMAP-Rule" id="MF_00038"/>
    </source>
</evidence>
<name>MRAY_STAAB</name>